<reference key="1">
    <citation type="journal article" date="2006" name="BMC Genomics">
        <title>Complete genome sequence of Shigella flexneri 5b and comparison with Shigella flexneri 2a.</title>
        <authorList>
            <person name="Nie H."/>
            <person name="Yang F."/>
            <person name="Zhang X."/>
            <person name="Yang J."/>
            <person name="Chen L."/>
            <person name="Wang J."/>
            <person name="Xiong Z."/>
            <person name="Peng J."/>
            <person name="Sun L."/>
            <person name="Dong J."/>
            <person name="Xue Y."/>
            <person name="Xu X."/>
            <person name="Chen S."/>
            <person name="Yao Z."/>
            <person name="Shen Y."/>
            <person name="Jin Q."/>
        </authorList>
    </citation>
    <scope>NUCLEOTIDE SEQUENCE [LARGE SCALE GENOMIC DNA]</scope>
    <source>
        <strain>8401</strain>
    </source>
</reference>
<proteinExistence type="inferred from homology"/>
<organism>
    <name type="scientific">Shigella flexneri serotype 5b (strain 8401)</name>
    <dbReference type="NCBI Taxonomy" id="373384"/>
    <lineage>
        <taxon>Bacteria</taxon>
        <taxon>Pseudomonadati</taxon>
        <taxon>Pseudomonadota</taxon>
        <taxon>Gammaproteobacteria</taxon>
        <taxon>Enterobacterales</taxon>
        <taxon>Enterobacteriaceae</taxon>
        <taxon>Shigella</taxon>
    </lineage>
</organism>
<sequence>MAQRIFTLILLLCSTSVFAGLFDAPGRSQFVPADQAFAFDFQQNQHDLNLTWQIKDGYYLYRKQIRITPEHAKIADVQLPQGVWHEDEFYGKSEIYRDRLTLPVTINQASAGATLTVTYQGCADAGFCYPPETKTVPLSEVVANNAASQPVSVSQQEQHTAQLPFSALWALLIGIGIAFTPCVLPMYPLISGIVLGGKQRLSTARALLLTFIYVQGMALTYTALGLVVAAAGLQFQAALQHPYVLIGLAIVFTLLAMSMFGLFTLQLPSSLQTRLTLMSNRQQGGSPGGVFVMGAIAGLICSPCTTAPLSAILLYIAQSGNMWLGGGTLYLYALGMGLPLMLITVFGNRLLPKSGPWMEQVKTAFGFVILALPVFLLERVIGDVWGLRLWSALGVAFFGWAFITSLQAKRGWMRVVQIILLAAALVSVRPLQDWAFGATHTAQTQTHLNFTQIKTVDELNQALVEAKGKPVMLDLYADWCVACKEFEKYTFSDPQVQKALADTVLLQANVTANDAQDVALLKHLNVLGLPTILFFDGQGQEHPQARVTGFMDAETFSAHLRDRQP</sequence>
<protein>
    <recommendedName>
        <fullName evidence="1">Thiol:disulfide interchange protein DsbD</fullName>
        <ecNumber evidence="1">1.8.1.8</ecNumber>
    </recommendedName>
    <alternativeName>
        <fullName evidence="1">Protein-disulfide reductase</fullName>
        <shortName evidence="1">Disulfide reductase</shortName>
    </alternativeName>
</protein>
<dbReference type="EC" id="1.8.1.8" evidence="1"/>
<dbReference type="EMBL" id="CP000266">
    <property type="protein sequence ID" value="ABF06272.1"/>
    <property type="molecule type" value="Genomic_DNA"/>
</dbReference>
<dbReference type="RefSeq" id="WP_000068936.1">
    <property type="nucleotide sequence ID" value="NC_008258.1"/>
</dbReference>
<dbReference type="BMRB" id="Q0SXE3"/>
<dbReference type="SMR" id="Q0SXE3"/>
<dbReference type="KEGG" id="sfv:SFV_4292"/>
<dbReference type="HOGENOM" id="CLU_014657_3_0_6"/>
<dbReference type="Proteomes" id="UP000000659">
    <property type="component" value="Chromosome"/>
</dbReference>
<dbReference type="GO" id="GO:0005886">
    <property type="term" value="C:plasma membrane"/>
    <property type="evidence" value="ECO:0007669"/>
    <property type="project" value="UniProtKB-SubCell"/>
</dbReference>
<dbReference type="GO" id="GO:0009055">
    <property type="term" value="F:electron transfer activity"/>
    <property type="evidence" value="ECO:0007669"/>
    <property type="project" value="UniProtKB-UniRule"/>
</dbReference>
<dbReference type="GO" id="GO:0047134">
    <property type="term" value="F:protein-disulfide reductase [NAD(P)H] activity"/>
    <property type="evidence" value="ECO:0007669"/>
    <property type="project" value="UniProtKB-UniRule"/>
</dbReference>
<dbReference type="GO" id="GO:0045454">
    <property type="term" value="P:cell redox homeostasis"/>
    <property type="evidence" value="ECO:0007669"/>
    <property type="project" value="TreeGrafter"/>
</dbReference>
<dbReference type="GO" id="GO:0017004">
    <property type="term" value="P:cytochrome complex assembly"/>
    <property type="evidence" value="ECO:0007669"/>
    <property type="project" value="UniProtKB-UniRule"/>
</dbReference>
<dbReference type="CDD" id="cd02953">
    <property type="entry name" value="DsbDgamma"/>
    <property type="match status" value="1"/>
</dbReference>
<dbReference type="FunFam" id="2.60.40.1250:FF:000001">
    <property type="entry name" value="Thiol:disulfide interchange protein DsbD"/>
    <property type="match status" value="1"/>
</dbReference>
<dbReference type="FunFam" id="3.40.30.10:FF:000116">
    <property type="entry name" value="Thiol:disulfide interchange protein DsbD"/>
    <property type="match status" value="1"/>
</dbReference>
<dbReference type="Gene3D" id="3.40.30.10">
    <property type="entry name" value="Glutaredoxin"/>
    <property type="match status" value="1"/>
</dbReference>
<dbReference type="Gene3D" id="2.60.40.1250">
    <property type="entry name" value="Thiol:disulfide interchange protein DsbD, N-terminal domain"/>
    <property type="match status" value="1"/>
</dbReference>
<dbReference type="HAMAP" id="MF_00399">
    <property type="entry name" value="DbsD"/>
    <property type="match status" value="1"/>
</dbReference>
<dbReference type="InterPro" id="IPR003834">
    <property type="entry name" value="Cyt_c_assmbl_TM_dom"/>
</dbReference>
<dbReference type="InterPro" id="IPR035671">
    <property type="entry name" value="DsbD_gamma"/>
</dbReference>
<dbReference type="InterPro" id="IPR028250">
    <property type="entry name" value="DsbDN"/>
</dbReference>
<dbReference type="InterPro" id="IPR036929">
    <property type="entry name" value="DsbDN_sf"/>
</dbReference>
<dbReference type="InterPro" id="IPR022910">
    <property type="entry name" value="Thiol_diS_interchange_DbsD"/>
</dbReference>
<dbReference type="InterPro" id="IPR012336">
    <property type="entry name" value="Thioredoxin-like_fold"/>
</dbReference>
<dbReference type="InterPro" id="IPR036249">
    <property type="entry name" value="Thioredoxin-like_sf"/>
</dbReference>
<dbReference type="InterPro" id="IPR017937">
    <property type="entry name" value="Thioredoxin_CS"/>
</dbReference>
<dbReference type="InterPro" id="IPR013766">
    <property type="entry name" value="Thioredoxin_domain"/>
</dbReference>
<dbReference type="NCBIfam" id="NF001419">
    <property type="entry name" value="PRK00293.1"/>
    <property type="match status" value="1"/>
</dbReference>
<dbReference type="PANTHER" id="PTHR32234">
    <property type="entry name" value="THIOL:DISULFIDE INTERCHANGE PROTEIN DSBD"/>
    <property type="match status" value="1"/>
</dbReference>
<dbReference type="PANTHER" id="PTHR32234:SF0">
    <property type="entry name" value="THIOL:DISULFIDE INTERCHANGE PROTEIN DSBD"/>
    <property type="match status" value="1"/>
</dbReference>
<dbReference type="Pfam" id="PF11412">
    <property type="entry name" value="DsbD_N"/>
    <property type="match status" value="1"/>
</dbReference>
<dbReference type="Pfam" id="PF02683">
    <property type="entry name" value="DsbD_TM"/>
    <property type="match status" value="1"/>
</dbReference>
<dbReference type="Pfam" id="PF13098">
    <property type="entry name" value="Thioredoxin_2"/>
    <property type="match status" value="1"/>
</dbReference>
<dbReference type="SUPFAM" id="SSF74863">
    <property type="entry name" value="Thiol:disulfide interchange protein DsbD, N-terminal domain (DsbD-alpha)"/>
    <property type="match status" value="1"/>
</dbReference>
<dbReference type="SUPFAM" id="SSF52833">
    <property type="entry name" value="Thioredoxin-like"/>
    <property type="match status" value="1"/>
</dbReference>
<dbReference type="PROSITE" id="PS00194">
    <property type="entry name" value="THIOREDOXIN_1"/>
    <property type="match status" value="1"/>
</dbReference>
<dbReference type="PROSITE" id="PS51352">
    <property type="entry name" value="THIOREDOXIN_2"/>
    <property type="match status" value="1"/>
</dbReference>
<accession>Q0SXE3</accession>
<evidence type="ECO:0000255" key="1">
    <source>
        <dbReference type="HAMAP-Rule" id="MF_00399"/>
    </source>
</evidence>
<gene>
    <name evidence="1" type="primary">dsbD</name>
    <name type="ordered locus">SFV_4292</name>
</gene>
<name>DSBD_SHIF8</name>
<keyword id="KW-0997">Cell inner membrane</keyword>
<keyword id="KW-1003">Cell membrane</keyword>
<keyword id="KW-0201">Cytochrome c-type biogenesis</keyword>
<keyword id="KW-1015">Disulfide bond</keyword>
<keyword id="KW-0249">Electron transport</keyword>
<keyword id="KW-0472">Membrane</keyword>
<keyword id="KW-0520">NAD</keyword>
<keyword id="KW-0560">Oxidoreductase</keyword>
<keyword id="KW-0676">Redox-active center</keyword>
<keyword id="KW-0732">Signal</keyword>
<keyword id="KW-0812">Transmembrane</keyword>
<keyword id="KW-1133">Transmembrane helix</keyword>
<keyword id="KW-0813">Transport</keyword>
<feature type="signal peptide" evidence="1">
    <location>
        <begin position="1"/>
        <end position="19"/>
    </location>
</feature>
<feature type="chain" id="PRO_0000304398" description="Thiol:disulfide interchange protein DsbD">
    <location>
        <begin position="20"/>
        <end position="565"/>
    </location>
</feature>
<feature type="transmembrane region" description="Helical" evidence="1">
    <location>
        <begin position="163"/>
        <end position="183"/>
    </location>
</feature>
<feature type="transmembrane region" description="Helical" evidence="1">
    <location>
        <begin position="208"/>
        <end position="228"/>
    </location>
</feature>
<feature type="transmembrane region" description="Helical" evidence="1">
    <location>
        <begin position="243"/>
        <end position="263"/>
    </location>
</feature>
<feature type="transmembrane region" description="Helical" evidence="1">
    <location>
        <begin position="296"/>
        <end position="316"/>
    </location>
</feature>
<feature type="transmembrane region" description="Helical" evidence="1">
    <location>
        <begin position="323"/>
        <end position="343"/>
    </location>
</feature>
<feature type="transmembrane region" description="Helical" evidence="1">
    <location>
        <begin position="357"/>
        <end position="377"/>
    </location>
</feature>
<feature type="transmembrane region" description="Helical" evidence="1">
    <location>
        <begin position="384"/>
        <end position="404"/>
    </location>
</feature>
<feature type="domain" description="Thioredoxin" evidence="1">
    <location>
        <begin position="434"/>
        <end position="565"/>
    </location>
</feature>
<feature type="disulfide bond" description="Redox-active" evidence="1">
    <location>
        <begin position="122"/>
        <end position="128"/>
    </location>
</feature>
<feature type="disulfide bond" description="Redox-active" evidence="1">
    <location>
        <begin position="182"/>
        <end position="304"/>
    </location>
</feature>
<feature type="disulfide bond" description="Redox-active" evidence="1">
    <location>
        <begin position="480"/>
        <end position="483"/>
    </location>
</feature>
<comment type="function">
    <text evidence="1">Required to facilitate the formation of correct disulfide bonds in some periplasmic proteins and for the assembly of the periplasmic c-type cytochromes. Acts by transferring electrons from cytoplasmic thioredoxin to the periplasm. This transfer involves a cascade of disulfide bond formation and reduction steps.</text>
</comment>
<comment type="catalytic activity">
    <reaction evidence="1">
        <text>[protein]-dithiol + NAD(+) = [protein]-disulfide + NADH + H(+)</text>
        <dbReference type="Rhea" id="RHEA:18749"/>
        <dbReference type="Rhea" id="RHEA-COMP:10593"/>
        <dbReference type="Rhea" id="RHEA-COMP:10594"/>
        <dbReference type="ChEBI" id="CHEBI:15378"/>
        <dbReference type="ChEBI" id="CHEBI:29950"/>
        <dbReference type="ChEBI" id="CHEBI:50058"/>
        <dbReference type="ChEBI" id="CHEBI:57540"/>
        <dbReference type="ChEBI" id="CHEBI:57945"/>
        <dbReference type="EC" id="1.8.1.8"/>
    </reaction>
</comment>
<comment type="catalytic activity">
    <reaction evidence="1">
        <text>[protein]-dithiol + NADP(+) = [protein]-disulfide + NADPH + H(+)</text>
        <dbReference type="Rhea" id="RHEA:18753"/>
        <dbReference type="Rhea" id="RHEA-COMP:10593"/>
        <dbReference type="Rhea" id="RHEA-COMP:10594"/>
        <dbReference type="ChEBI" id="CHEBI:15378"/>
        <dbReference type="ChEBI" id="CHEBI:29950"/>
        <dbReference type="ChEBI" id="CHEBI:50058"/>
        <dbReference type="ChEBI" id="CHEBI:57783"/>
        <dbReference type="ChEBI" id="CHEBI:58349"/>
        <dbReference type="EC" id="1.8.1.8"/>
    </reaction>
</comment>
<comment type="subcellular location">
    <subcellularLocation>
        <location evidence="1">Cell inner membrane</location>
        <topology evidence="1">Multi-pass membrane protein</topology>
    </subcellularLocation>
</comment>
<comment type="similarity">
    <text evidence="1">Belongs to the thioredoxin family. DsbD subfamily.</text>
</comment>